<protein>
    <recommendedName>
        <fullName evidence="1">Mineralization regulator ANKH</fullName>
    </recommendedName>
    <alternativeName>
        <fullName evidence="1">ATP carrier protein ANKH</fullName>
    </alternativeName>
    <alternativeName>
        <fullName>Fn54 protein</fullName>
    </alternativeName>
    <alternativeName>
        <fullName>Progressive ankylosis protein homolog</fullName>
        <shortName evidence="1">ANK</shortName>
    </alternativeName>
</protein>
<gene>
    <name evidence="7 10" type="primary">Ankh</name>
    <name type="synonym">Ank</name>
</gene>
<sequence length="492" mass="54298">MVKFPALTHYWPLIRFLVPLGITNIAIDFGEQALNRGIAAVKEDAVEMLASYGLAYSLMKFFTGPMSDFKNVGLVFVNSKRDRAKAVLCMVVAGAIAAVFHTLIAYSDLGYYIINKLHHVDESVGSKTRRAFLYLAAFPFMDAMAWTHAGILLKHKYSFLVGCASISDVIAQVVFVAILLHSHLECREPLLIPILSLYMGALVRCTTLCLGYYRNIHDIIPDRSGPELGGDATIRKMLSFWWPLALILATQRISRPIVNLFVSRDLGGSSAATEAVAILTATYPVGHMPYGWLTEIRAVYPAFDKNNPSNKLANTSNTVTSAHIKKFTFVCMALSLTLCFVMFWTPNVSEKILIDIIGVDFAFAELCVIPLRIFSFFPVPVTVRAHLTGWLMTLKKTFVLAPSSVLRIIVLITSLVVLPYLGVHGATLGVGSLLAGFVGESTMVALAACYVYRKQKKKMENESATEGEDSAMTDMPPTEEVTDIVEMREENE</sequence>
<evidence type="ECO:0000250" key="1">
    <source>
        <dbReference type="UniProtKB" id="Q9HCJ1"/>
    </source>
</evidence>
<evidence type="ECO:0000255" key="2"/>
<evidence type="ECO:0000256" key="3">
    <source>
        <dbReference type="SAM" id="MobiDB-lite"/>
    </source>
</evidence>
<evidence type="ECO:0000269" key="4">
    <source>
    </source>
</evidence>
<evidence type="ECO:0000269" key="5">
    <source>
    </source>
</evidence>
<evidence type="ECO:0000269" key="6">
    <source>
    </source>
</evidence>
<evidence type="ECO:0000303" key="7">
    <source>
    </source>
</evidence>
<evidence type="ECO:0000305" key="8"/>
<evidence type="ECO:0000305" key="9">
    <source>
    </source>
</evidence>
<evidence type="ECO:0000312" key="10">
    <source>
        <dbReference type="MGI" id="MGI:3045421"/>
    </source>
</evidence>
<name>ANKH_MOUSE</name>
<proteinExistence type="evidence at transcript level"/>
<keyword id="KW-1003">Cell membrane</keyword>
<keyword id="KW-0472">Membrane</keyword>
<keyword id="KW-1185">Reference proteome</keyword>
<keyword id="KW-0812">Transmembrane</keyword>
<keyword id="KW-1133">Transmembrane helix</keyword>
<keyword id="KW-0813">Transport</keyword>
<dbReference type="EMBL" id="AF274752">
    <property type="protein sequence ID" value="AAF88038.1"/>
    <property type="molecule type" value="mRNA"/>
</dbReference>
<dbReference type="EMBL" id="AF001532">
    <property type="protein sequence ID" value="AAB65653.1"/>
    <property type="molecule type" value="mRNA"/>
</dbReference>
<dbReference type="EMBL" id="AF001533">
    <property type="protein sequence ID" value="AAB65654.2"/>
    <property type="molecule type" value="mRNA"/>
</dbReference>
<dbReference type="EMBL" id="BC054379">
    <property type="protein sequence ID" value="AAH54379.1"/>
    <property type="molecule type" value="mRNA"/>
</dbReference>
<dbReference type="CCDS" id="CCDS27402.1"/>
<dbReference type="RefSeq" id="NP_065065.3">
    <property type="nucleotide sequence ID" value="NM_020332.4"/>
</dbReference>
<dbReference type="SMR" id="Q9JHZ2"/>
<dbReference type="BioGRID" id="198100">
    <property type="interactions" value="3"/>
</dbReference>
<dbReference type="FunCoup" id="Q9JHZ2">
    <property type="interactions" value="549"/>
</dbReference>
<dbReference type="STRING" id="10090.ENSMUSP00000022875"/>
<dbReference type="iPTMnet" id="Q9JHZ2"/>
<dbReference type="PhosphoSitePlus" id="Q9JHZ2"/>
<dbReference type="PaxDb" id="10090-ENSMUSP00000022875"/>
<dbReference type="ProteomicsDB" id="296038"/>
<dbReference type="Pumba" id="Q9JHZ2"/>
<dbReference type="Antibodypedia" id="43269">
    <property type="antibodies" value="118 antibodies from 26 providers"/>
</dbReference>
<dbReference type="DNASU" id="11732"/>
<dbReference type="Ensembl" id="ENSMUST00000022875.7">
    <property type="protein sequence ID" value="ENSMUSP00000022875.7"/>
    <property type="gene ID" value="ENSMUSG00000022265.8"/>
</dbReference>
<dbReference type="GeneID" id="11732"/>
<dbReference type="KEGG" id="mmu:11732"/>
<dbReference type="UCSC" id="uc007vjo.2">
    <property type="organism name" value="mouse"/>
</dbReference>
<dbReference type="AGR" id="MGI:3045421"/>
<dbReference type="CTD" id="11732"/>
<dbReference type="MGI" id="MGI:3045421">
    <property type="gene designation" value="Ank"/>
</dbReference>
<dbReference type="VEuPathDB" id="HostDB:ENSMUSG00000022265"/>
<dbReference type="eggNOG" id="ENOG502QWCU">
    <property type="taxonomic scope" value="Eukaryota"/>
</dbReference>
<dbReference type="GeneTree" id="ENSGT00390000012189"/>
<dbReference type="HOGENOM" id="CLU_044298_0_0_1"/>
<dbReference type="InParanoid" id="Q9JHZ2"/>
<dbReference type="OMA" id="FYQGILI"/>
<dbReference type="OrthoDB" id="10055429at2759"/>
<dbReference type="PhylomeDB" id="Q9JHZ2"/>
<dbReference type="TreeFam" id="TF333504"/>
<dbReference type="Reactome" id="R-MMU-5223345">
    <property type="pathway name" value="Miscellaneous transport and binding events"/>
</dbReference>
<dbReference type="BioGRID-ORCS" id="11732">
    <property type="hits" value="0 hits in 76 CRISPR screens"/>
</dbReference>
<dbReference type="ChiTaRS" id="Ank">
    <property type="organism name" value="mouse"/>
</dbReference>
<dbReference type="PRO" id="PR:Q9JHZ2"/>
<dbReference type="Proteomes" id="UP000000589">
    <property type="component" value="Chromosome 15"/>
</dbReference>
<dbReference type="RNAct" id="Q9JHZ2">
    <property type="molecule type" value="protein"/>
</dbReference>
<dbReference type="Bgee" id="ENSMUSG00000022265">
    <property type="expression patterns" value="Expressed in seminal vesicle and 275 other cell types or tissues"/>
</dbReference>
<dbReference type="ExpressionAtlas" id="Q9JHZ2">
    <property type="expression patterns" value="baseline and differential"/>
</dbReference>
<dbReference type="GO" id="GO:0005576">
    <property type="term" value="C:extracellular region"/>
    <property type="evidence" value="ECO:0000315"/>
    <property type="project" value="MGI"/>
</dbReference>
<dbReference type="GO" id="GO:0016020">
    <property type="term" value="C:membrane"/>
    <property type="evidence" value="ECO:0000314"/>
    <property type="project" value="UniProtKB"/>
</dbReference>
<dbReference type="GO" id="GO:0005886">
    <property type="term" value="C:plasma membrane"/>
    <property type="evidence" value="ECO:0000314"/>
    <property type="project" value="UniProtKB"/>
</dbReference>
<dbReference type="GO" id="GO:0005347">
    <property type="term" value="F:ATP transmembrane transporter activity"/>
    <property type="evidence" value="ECO:0007669"/>
    <property type="project" value="Ensembl"/>
</dbReference>
<dbReference type="GO" id="GO:0030504">
    <property type="term" value="F:inorganic diphosphate transmembrane transporter activity"/>
    <property type="evidence" value="ECO:0000314"/>
    <property type="project" value="UniProtKB"/>
</dbReference>
<dbReference type="GO" id="GO:0005315">
    <property type="term" value="F:phosphate transmembrane transporter activity"/>
    <property type="evidence" value="ECO:0007669"/>
    <property type="project" value="Ensembl"/>
</dbReference>
<dbReference type="GO" id="GO:1904669">
    <property type="term" value="P:ATP export"/>
    <property type="evidence" value="ECO:0007669"/>
    <property type="project" value="Ensembl"/>
</dbReference>
<dbReference type="GO" id="GO:0030282">
    <property type="term" value="P:bone mineralization"/>
    <property type="evidence" value="ECO:0000314"/>
    <property type="project" value="MGI"/>
</dbReference>
<dbReference type="GO" id="GO:0055074">
    <property type="term" value="P:calcium ion homeostasis"/>
    <property type="evidence" value="ECO:0000315"/>
    <property type="project" value="MGI"/>
</dbReference>
<dbReference type="GO" id="GO:0071529">
    <property type="term" value="P:cementum mineralization"/>
    <property type="evidence" value="ECO:0000314"/>
    <property type="project" value="MGI"/>
</dbReference>
<dbReference type="GO" id="GO:0071344">
    <property type="term" value="P:diphosphate metabolic process"/>
    <property type="evidence" value="ECO:0000314"/>
    <property type="project" value="MGI"/>
</dbReference>
<dbReference type="GO" id="GO:0010467">
    <property type="term" value="P:gene expression"/>
    <property type="evidence" value="ECO:0000314"/>
    <property type="project" value="MGI"/>
</dbReference>
<dbReference type="GO" id="GO:0140928">
    <property type="term" value="P:inhibition of non-skeletal tissue mineralization"/>
    <property type="evidence" value="ECO:0000314"/>
    <property type="project" value="MGI"/>
</dbReference>
<dbReference type="GO" id="GO:0030505">
    <property type="term" value="P:inorganic diphosphate transport"/>
    <property type="evidence" value="ECO:0000315"/>
    <property type="project" value="MGI"/>
</dbReference>
<dbReference type="GO" id="GO:0046716">
    <property type="term" value="P:muscle cell cellular homeostasis"/>
    <property type="evidence" value="ECO:0000315"/>
    <property type="project" value="MGI"/>
</dbReference>
<dbReference type="GO" id="GO:0055062">
    <property type="term" value="P:phosphate ion homeostasis"/>
    <property type="evidence" value="ECO:0000315"/>
    <property type="project" value="MGI"/>
</dbReference>
<dbReference type="GO" id="GO:0035435">
    <property type="term" value="P:phosphate ion transmembrane transport"/>
    <property type="evidence" value="ECO:0007669"/>
    <property type="project" value="InterPro"/>
</dbReference>
<dbReference type="GO" id="GO:0030500">
    <property type="term" value="P:regulation of bone mineralization"/>
    <property type="evidence" value="ECO:0000315"/>
    <property type="project" value="UniProtKB"/>
</dbReference>
<dbReference type="GO" id="GO:1904383">
    <property type="term" value="P:response to sodium phosphate"/>
    <property type="evidence" value="ECO:0000315"/>
    <property type="project" value="MGI"/>
</dbReference>
<dbReference type="InterPro" id="IPR009887">
    <property type="entry name" value="ANKH"/>
</dbReference>
<dbReference type="PANTHER" id="PTHR28384">
    <property type="entry name" value="PROGRESSIVE ANKYLOSIS PROTEIN HOMOLOG"/>
    <property type="match status" value="1"/>
</dbReference>
<dbReference type="PANTHER" id="PTHR28384:SF1">
    <property type="entry name" value="PROGRESSIVE ANKYLOSIS PROTEIN HOMOLOG"/>
    <property type="match status" value="1"/>
</dbReference>
<dbReference type="Pfam" id="PF07260">
    <property type="entry name" value="ANKH"/>
    <property type="match status" value="1"/>
</dbReference>
<reference key="1">
    <citation type="journal article" date="2000" name="Science">
        <title>Role of the mouse ank gene in control of tissue calcification and arthritis.</title>
        <authorList>
            <person name="Ho A.M."/>
            <person name="Johnson M.D."/>
            <person name="Kingsley D.M."/>
        </authorList>
    </citation>
    <scope>NUCLEOTIDE SEQUENCE [MRNA]</scope>
    <scope>VARIANT VAL-201</scope>
    <source>
        <strain>C57BL/6J</strain>
        <tissue>Brain</tissue>
    </source>
</reference>
<reference key="2">
    <citation type="submission" date="1999-07" db="EMBL/GenBank/DDBJ databases">
        <title>Molecular cloning and characterization of a mitogen-inducible gene differentially expressed in androgen-dependent and independent prostate carcinoma cell lines.</title>
        <authorList>
            <person name="Guo Y."/>
            <person name="Hsu D.K.W."/>
            <person name="Alberts G.F."/>
            <person name="Feng S.-L."/>
            <person name="Copeland N.G."/>
            <person name="Gilbert D.J."/>
            <person name="Jenkins N.A."/>
            <person name="Peifley K.A."/>
            <person name="Winkles J.A."/>
        </authorList>
    </citation>
    <scope>NUCLEOTIDE SEQUENCE [MRNA]</scope>
    <source>
        <strain>BALB/cJ</strain>
    </source>
</reference>
<reference key="3">
    <citation type="journal article" date="2004" name="Genome Res.">
        <title>The status, quality, and expansion of the NIH full-length cDNA project: the Mammalian Gene Collection (MGC).</title>
        <authorList>
            <consortium name="The MGC Project Team"/>
        </authorList>
    </citation>
    <scope>NUCLEOTIDE SEQUENCE [LARGE SCALE MRNA]</scope>
    <source>
        <tissue>Olfactory epithelium</tissue>
    </source>
</reference>
<reference key="4">
    <citation type="journal article" date="2011" name="J. Clin. Endocrinol. Metab.">
        <title>Autosomal recessive mental retardation, deafness, ankylosis, and mild hypophosphatemia associated with a novel ANKH mutation in a consanguineous family.</title>
        <authorList>
            <person name="Morava E."/>
            <person name="Kuehnisch J."/>
            <person name="Drijvers J.M."/>
            <person name="Robben J.H."/>
            <person name="Cremers C."/>
            <person name="van Setten P."/>
            <person name="Branten A."/>
            <person name="Stumpp S."/>
            <person name="de Jong A."/>
            <person name="Voesenek K."/>
            <person name="Vermeer S."/>
            <person name="Heister A."/>
            <person name="Claahsen-van der Grinten H.L."/>
            <person name="O'Neill C.W."/>
            <person name="Willemsen M.A."/>
            <person name="Lefeber D."/>
            <person name="Deen P.M."/>
            <person name="Kornak U."/>
            <person name="Kremer H."/>
            <person name="Wevers R.A."/>
        </authorList>
    </citation>
    <scope>DISRUPTION PHENOTYPE</scope>
</reference>
<reference key="5">
    <citation type="journal article" date="2020" name="PLoS Genet.">
        <title>The membrane protein ANKH is crucial for bone mechanical performance by mediating cellular export of citrate and ATP.</title>
        <authorList>
            <person name="Szeri F."/>
            <person name="Lundkvist S."/>
            <person name="Donnelly S."/>
            <person name="Engelke U.F.H."/>
            <person name="Rhee K."/>
            <person name="Williams C.J."/>
            <person name="Sundberg J.P."/>
            <person name="Wevers R.A."/>
            <person name="Tomlinson R.E."/>
            <person name="Jansen R.S."/>
            <person name="van de Wetering K."/>
        </authorList>
    </citation>
    <scope>FUNCTION</scope>
    <scope>TRANSPORTER ACTIVITY</scope>
    <scope>DISRUPTION PHENOTYPE</scope>
</reference>
<accession>Q9JHZ2</accession>
<accession>O35138</accession>
<accession>O35139</accession>
<feature type="chain" id="PRO_0000137468" description="Mineralization regulator ANKH">
    <location>
        <begin position="1"/>
        <end position="492"/>
    </location>
</feature>
<feature type="topological domain" description="Cytoplasmic" evidence="2">
    <location>
        <begin position="1"/>
        <end position="85"/>
    </location>
</feature>
<feature type="transmembrane region" description="Helical" evidence="2">
    <location>
        <begin position="86"/>
        <end position="106"/>
    </location>
</feature>
<feature type="topological domain" description="Extracellular" evidence="2">
    <location>
        <begin position="107"/>
        <end position="131"/>
    </location>
</feature>
<feature type="transmembrane region" description="Helical" evidence="2">
    <location>
        <begin position="132"/>
        <end position="152"/>
    </location>
</feature>
<feature type="topological domain" description="Cytoplasmic" evidence="2">
    <location>
        <begin position="153"/>
        <end position="158"/>
    </location>
</feature>
<feature type="transmembrane region" description="Helical" evidence="2">
    <location>
        <begin position="159"/>
        <end position="179"/>
    </location>
</feature>
<feature type="topological domain" description="Extracellular" evidence="2">
    <location>
        <begin position="180"/>
        <end position="189"/>
    </location>
</feature>
<feature type="transmembrane region" description="Helical" evidence="2">
    <location>
        <begin position="190"/>
        <end position="210"/>
    </location>
</feature>
<feature type="topological domain" description="Cytoplasmic" evidence="2">
    <location>
        <begin position="211"/>
        <end position="326"/>
    </location>
</feature>
<feature type="transmembrane region" description="Helical" evidence="2">
    <location>
        <begin position="327"/>
        <end position="347"/>
    </location>
</feature>
<feature type="topological domain" description="Extracellular" evidence="2">
    <location>
        <begin position="348"/>
        <end position="350"/>
    </location>
</feature>
<feature type="transmembrane region" description="Helical" evidence="2">
    <location>
        <begin position="351"/>
        <end position="371"/>
    </location>
</feature>
<feature type="topological domain" description="Cytoplasmic" evidence="2">
    <location>
        <begin position="372"/>
        <end position="403"/>
    </location>
</feature>
<feature type="transmembrane region" description="Helical" evidence="2">
    <location>
        <begin position="404"/>
        <end position="426"/>
    </location>
</feature>
<feature type="topological domain" description="Extracellular" evidence="2">
    <location>
        <begin position="427"/>
        <end position="429"/>
    </location>
</feature>
<feature type="transmembrane region" description="Helical" evidence="2">
    <location>
        <begin position="430"/>
        <end position="452"/>
    </location>
</feature>
<feature type="topological domain" description="Cytoplasmic" evidence="2">
    <location>
        <begin position="453"/>
        <end position="492"/>
    </location>
</feature>
<feature type="region of interest" description="Disordered" evidence="3">
    <location>
        <begin position="458"/>
        <end position="492"/>
    </location>
</feature>
<feature type="sequence variant" description="In strain: C3H." evidence="4">
    <original>A</original>
    <variation>V</variation>
    <location>
        <position position="201"/>
    </location>
</feature>
<comment type="function">
    <text evidence="1 6">Transports adenosine triphosphate (ATP) and possibly other nucleoside triphosphates (NTPs) from cytosol to the extracellular space. Mainly regulates their levels locally in peripheral tissues while playing a minor systemic role. Prevents abnormal ectopic mineralization of the joints by regulating the extracellular levels of the calcification inhibitor inorganic pyrophosphate (PPi), which originates from the conversion of extracellular NTPs to NMPs and PPis by ENPP1. Regulates the release of the TCA cycle intermediates to the extracellular space, in particular citrate, succinate and malate. Extracellular citrate mostly present in bone tissue is required for osteogenic differentiation of mesenchymal stem cells, stabilization of hydroxyapatite structure and overall bone strength. The transport mechanism remains to be elucidated.</text>
</comment>
<comment type="catalytic activity">
    <reaction evidence="6">
        <text>ATP(in) = ATP(out)</text>
        <dbReference type="Rhea" id="RHEA:75687"/>
        <dbReference type="ChEBI" id="CHEBI:30616"/>
    </reaction>
    <physiologicalReaction direction="left-to-right" evidence="9">
        <dbReference type="Rhea" id="RHEA:75688"/>
    </physiologicalReaction>
</comment>
<comment type="catalytic activity">
    <reaction evidence="1">
        <text>citrate(in) = citrate(out)</text>
        <dbReference type="Rhea" id="RHEA:33183"/>
        <dbReference type="ChEBI" id="CHEBI:16947"/>
    </reaction>
    <physiologicalReaction direction="left-to-right" evidence="1">
        <dbReference type="Rhea" id="RHEA:33184"/>
    </physiologicalReaction>
</comment>
<comment type="subcellular location">
    <subcellularLocation>
        <location evidence="1">Cell membrane</location>
        <topology evidence="2">Multi-pass membrane protein</topology>
    </subcellularLocation>
</comment>
<comment type="tissue specificity">
    <text>Expressed in heart, brain, liver, spleen, lung, muscle, and kidney of adult animals. Strongly expressed in the developing articular cartilage of joints in the shoulder, elbow, wrist, and digits of the embryo.</text>
</comment>
<comment type="disease">
    <text>Defects in Ankh are the cause of a generalized, progressive form of arthritis. In ank mice hydroxyapatite crystals develop in articular surfaces and synovial fluid leading to joint space narrowing, cartilage erosion, and formation of bony outgrowths or osteophytes that cause fusion and joint immobility and destruction.</text>
</comment>
<comment type="disruption phenotype">
    <text evidence="5 6">Mutant mice develop early-onset osteopenia in long bones associated with diminished bone strength. They show widespread calcification of soft connective tissues due to almost absence of PPi in plasma.</text>
</comment>
<comment type="similarity">
    <text evidence="8">Belongs to the ANKH family.</text>
</comment>
<organism>
    <name type="scientific">Mus musculus</name>
    <name type="common">Mouse</name>
    <dbReference type="NCBI Taxonomy" id="10090"/>
    <lineage>
        <taxon>Eukaryota</taxon>
        <taxon>Metazoa</taxon>
        <taxon>Chordata</taxon>
        <taxon>Craniata</taxon>
        <taxon>Vertebrata</taxon>
        <taxon>Euteleostomi</taxon>
        <taxon>Mammalia</taxon>
        <taxon>Eutheria</taxon>
        <taxon>Euarchontoglires</taxon>
        <taxon>Glires</taxon>
        <taxon>Rodentia</taxon>
        <taxon>Myomorpha</taxon>
        <taxon>Muroidea</taxon>
        <taxon>Muridae</taxon>
        <taxon>Murinae</taxon>
        <taxon>Mus</taxon>
        <taxon>Mus</taxon>
    </lineage>
</organism>